<reference key="1">
    <citation type="journal article" date="2005" name="Genome Res.">
        <title>Comparative and functional genomic analyses of the pathogenicity of phytopathogen Xanthomonas campestris pv. campestris.</title>
        <authorList>
            <person name="Qian W."/>
            <person name="Jia Y."/>
            <person name="Ren S.-X."/>
            <person name="He Y.-Q."/>
            <person name="Feng J.-X."/>
            <person name="Lu L.-F."/>
            <person name="Sun Q."/>
            <person name="Ying G."/>
            <person name="Tang D.-J."/>
            <person name="Tang H."/>
            <person name="Wu W."/>
            <person name="Hao P."/>
            <person name="Wang L."/>
            <person name="Jiang B.-L."/>
            <person name="Zeng S."/>
            <person name="Gu W.-Y."/>
            <person name="Lu G."/>
            <person name="Rong L."/>
            <person name="Tian Y."/>
            <person name="Yao Z."/>
            <person name="Fu G."/>
            <person name="Chen B."/>
            <person name="Fang R."/>
            <person name="Qiang B."/>
            <person name="Chen Z."/>
            <person name="Zhao G.-P."/>
            <person name="Tang J.-L."/>
            <person name="He C."/>
        </authorList>
    </citation>
    <scope>NUCLEOTIDE SEQUENCE [LARGE SCALE GENOMIC DNA]</scope>
    <source>
        <strain>8004</strain>
    </source>
</reference>
<sequence>MGRGPSIEGRKNASDAKRGKIFTKIIREISVAARAGGGDPSNNPRLRTAMDKGLSSNMSKDVIERAIKKATGELEGVEYEEVRYEGYAPGGVAVIVDCLTDNRVRAVADVRHAFSKCGGNMGTDGSVAFMFKRLGVLSFAAGADEDAVTEAAIEAGADDVVVYPEDGAIDVLTAPDTFAQVKQALATAGFEPAHAEITFRAENDIAVDGDTAVQVRKLLDMLEDLDDVQDVYSNVDQASLGA</sequence>
<comment type="subcellular location">
    <subcellularLocation>
        <location evidence="1">Cytoplasm</location>
    </subcellularLocation>
</comment>
<comment type="similarity">
    <text evidence="1">Belongs to the TACO1 family.</text>
</comment>
<keyword id="KW-0963">Cytoplasm</keyword>
<keyword id="KW-0238">DNA-binding</keyword>
<keyword id="KW-0804">Transcription</keyword>
<keyword id="KW-0805">Transcription regulation</keyword>
<dbReference type="EMBL" id="CP000050">
    <property type="protein sequence ID" value="AAY48201.1"/>
    <property type="molecule type" value="Genomic_DNA"/>
</dbReference>
<dbReference type="RefSeq" id="WP_011038142.1">
    <property type="nucleotide sequence ID" value="NZ_CP155948.1"/>
</dbReference>
<dbReference type="SMR" id="Q4UXM2"/>
<dbReference type="KEGG" id="xcb:XC_1131"/>
<dbReference type="HOGENOM" id="CLU_062974_2_2_6"/>
<dbReference type="Proteomes" id="UP000000420">
    <property type="component" value="Chromosome"/>
</dbReference>
<dbReference type="GO" id="GO:0005829">
    <property type="term" value="C:cytosol"/>
    <property type="evidence" value="ECO:0007669"/>
    <property type="project" value="TreeGrafter"/>
</dbReference>
<dbReference type="GO" id="GO:0003677">
    <property type="term" value="F:DNA binding"/>
    <property type="evidence" value="ECO:0007669"/>
    <property type="project" value="UniProtKB-UniRule"/>
</dbReference>
<dbReference type="GO" id="GO:0006355">
    <property type="term" value="P:regulation of DNA-templated transcription"/>
    <property type="evidence" value="ECO:0007669"/>
    <property type="project" value="UniProtKB-UniRule"/>
</dbReference>
<dbReference type="FunFam" id="1.10.10.200:FF:000007">
    <property type="entry name" value="Probable transcriptional regulatory protein AC801_15750"/>
    <property type="match status" value="1"/>
</dbReference>
<dbReference type="FunFam" id="3.30.70.980:FF:000002">
    <property type="entry name" value="Probable transcriptional regulatory protein YebC"/>
    <property type="match status" value="1"/>
</dbReference>
<dbReference type="Gene3D" id="1.10.10.200">
    <property type="match status" value="1"/>
</dbReference>
<dbReference type="Gene3D" id="3.30.70.980">
    <property type="match status" value="2"/>
</dbReference>
<dbReference type="HAMAP" id="MF_00693">
    <property type="entry name" value="Transcrip_reg_TACO1"/>
    <property type="match status" value="1"/>
</dbReference>
<dbReference type="InterPro" id="IPR017856">
    <property type="entry name" value="Integrase-like_N"/>
</dbReference>
<dbReference type="InterPro" id="IPR048300">
    <property type="entry name" value="TACO1_YebC-like_2nd/3rd_dom"/>
</dbReference>
<dbReference type="InterPro" id="IPR049083">
    <property type="entry name" value="TACO1_YebC_N"/>
</dbReference>
<dbReference type="InterPro" id="IPR002876">
    <property type="entry name" value="Transcrip_reg_TACO1-like"/>
</dbReference>
<dbReference type="InterPro" id="IPR026564">
    <property type="entry name" value="Transcrip_reg_TACO1-like_dom3"/>
</dbReference>
<dbReference type="InterPro" id="IPR029072">
    <property type="entry name" value="YebC-like"/>
</dbReference>
<dbReference type="NCBIfam" id="NF001030">
    <property type="entry name" value="PRK00110.1"/>
    <property type="match status" value="1"/>
</dbReference>
<dbReference type="NCBIfam" id="NF009044">
    <property type="entry name" value="PRK12378.1"/>
    <property type="match status" value="1"/>
</dbReference>
<dbReference type="NCBIfam" id="TIGR01033">
    <property type="entry name" value="YebC/PmpR family DNA-binding transcriptional regulator"/>
    <property type="match status" value="1"/>
</dbReference>
<dbReference type="PANTHER" id="PTHR12532:SF6">
    <property type="entry name" value="TRANSCRIPTIONAL REGULATORY PROTEIN YEBC-RELATED"/>
    <property type="match status" value="1"/>
</dbReference>
<dbReference type="PANTHER" id="PTHR12532">
    <property type="entry name" value="TRANSLATIONAL ACTIVATOR OF CYTOCHROME C OXIDASE 1"/>
    <property type="match status" value="1"/>
</dbReference>
<dbReference type="Pfam" id="PF20772">
    <property type="entry name" value="TACO1_YebC_N"/>
    <property type="match status" value="1"/>
</dbReference>
<dbReference type="Pfam" id="PF01709">
    <property type="entry name" value="Transcrip_reg"/>
    <property type="match status" value="1"/>
</dbReference>
<dbReference type="SUPFAM" id="SSF75625">
    <property type="entry name" value="YebC-like"/>
    <property type="match status" value="1"/>
</dbReference>
<feature type="chain" id="PRO_0000257157" description="Probable transcriptional regulatory protein XC_1131">
    <location>
        <begin position="1"/>
        <end position="242"/>
    </location>
</feature>
<gene>
    <name type="ordered locus">XC_1131</name>
</gene>
<accession>Q4UXM2</accession>
<organism>
    <name type="scientific">Xanthomonas campestris pv. campestris (strain 8004)</name>
    <dbReference type="NCBI Taxonomy" id="314565"/>
    <lineage>
        <taxon>Bacteria</taxon>
        <taxon>Pseudomonadati</taxon>
        <taxon>Pseudomonadota</taxon>
        <taxon>Gammaproteobacteria</taxon>
        <taxon>Lysobacterales</taxon>
        <taxon>Lysobacteraceae</taxon>
        <taxon>Xanthomonas</taxon>
    </lineage>
</organism>
<protein>
    <recommendedName>
        <fullName evidence="1">Probable transcriptional regulatory protein XC_1131</fullName>
    </recommendedName>
</protein>
<evidence type="ECO:0000255" key="1">
    <source>
        <dbReference type="HAMAP-Rule" id="MF_00693"/>
    </source>
</evidence>
<name>Y1131_XANC8</name>
<proteinExistence type="inferred from homology"/>